<keyword id="KW-0175">Coiled coil</keyword>
<keyword id="KW-0217">Developmental protein</keyword>
<keyword id="KW-0238">DNA-binding</keyword>
<keyword id="KW-1017">Isopeptide bond</keyword>
<keyword id="KW-0539">Nucleus</keyword>
<keyword id="KW-1185">Reference proteome</keyword>
<keyword id="KW-0832">Ubl conjugation</keyword>
<gene>
    <name type="primary">Pogk</name>
    <name type="synonym">Kiaa1513</name>
</gene>
<organism>
    <name type="scientific">Mus musculus</name>
    <name type="common">Mouse</name>
    <dbReference type="NCBI Taxonomy" id="10090"/>
    <lineage>
        <taxon>Eukaryota</taxon>
        <taxon>Metazoa</taxon>
        <taxon>Chordata</taxon>
        <taxon>Craniata</taxon>
        <taxon>Vertebrata</taxon>
        <taxon>Euteleostomi</taxon>
        <taxon>Mammalia</taxon>
        <taxon>Eutheria</taxon>
        <taxon>Euarchontoglires</taxon>
        <taxon>Glires</taxon>
        <taxon>Rodentia</taxon>
        <taxon>Myomorpha</taxon>
        <taxon>Muroidea</taxon>
        <taxon>Muridae</taxon>
        <taxon>Murinae</taxon>
        <taxon>Mus</taxon>
        <taxon>Mus</taxon>
    </lineage>
</organism>
<evidence type="ECO:0000250" key="1">
    <source>
        <dbReference type="UniProtKB" id="Q9P215"/>
    </source>
</evidence>
<evidence type="ECO:0000255" key="2"/>
<evidence type="ECO:0000255" key="3">
    <source>
        <dbReference type="PROSITE-ProRule" id="PRU00119"/>
    </source>
</evidence>
<evidence type="ECO:0000255" key="4">
    <source>
        <dbReference type="PROSITE-ProRule" id="PRU00583"/>
    </source>
</evidence>
<evidence type="ECO:0000256" key="5">
    <source>
        <dbReference type="SAM" id="MobiDB-lite"/>
    </source>
</evidence>
<evidence type="ECO:0000305" key="6"/>
<reference key="1">
    <citation type="journal article" date="2005" name="Science">
        <title>The transcriptional landscape of the mammalian genome.</title>
        <authorList>
            <person name="Carninci P."/>
            <person name="Kasukawa T."/>
            <person name="Katayama S."/>
            <person name="Gough J."/>
            <person name="Frith M.C."/>
            <person name="Maeda N."/>
            <person name="Oyama R."/>
            <person name="Ravasi T."/>
            <person name="Lenhard B."/>
            <person name="Wells C."/>
            <person name="Kodzius R."/>
            <person name="Shimokawa K."/>
            <person name="Bajic V.B."/>
            <person name="Brenner S.E."/>
            <person name="Batalov S."/>
            <person name="Forrest A.R."/>
            <person name="Zavolan M."/>
            <person name="Davis M.J."/>
            <person name="Wilming L.G."/>
            <person name="Aidinis V."/>
            <person name="Allen J.E."/>
            <person name="Ambesi-Impiombato A."/>
            <person name="Apweiler R."/>
            <person name="Aturaliya R.N."/>
            <person name="Bailey T.L."/>
            <person name="Bansal M."/>
            <person name="Baxter L."/>
            <person name="Beisel K.W."/>
            <person name="Bersano T."/>
            <person name="Bono H."/>
            <person name="Chalk A.M."/>
            <person name="Chiu K.P."/>
            <person name="Choudhary V."/>
            <person name="Christoffels A."/>
            <person name="Clutterbuck D.R."/>
            <person name="Crowe M.L."/>
            <person name="Dalla E."/>
            <person name="Dalrymple B.P."/>
            <person name="de Bono B."/>
            <person name="Della Gatta G."/>
            <person name="di Bernardo D."/>
            <person name="Down T."/>
            <person name="Engstrom P."/>
            <person name="Fagiolini M."/>
            <person name="Faulkner G."/>
            <person name="Fletcher C.F."/>
            <person name="Fukushima T."/>
            <person name="Furuno M."/>
            <person name="Futaki S."/>
            <person name="Gariboldi M."/>
            <person name="Georgii-Hemming P."/>
            <person name="Gingeras T.R."/>
            <person name="Gojobori T."/>
            <person name="Green R.E."/>
            <person name="Gustincich S."/>
            <person name="Harbers M."/>
            <person name="Hayashi Y."/>
            <person name="Hensch T.K."/>
            <person name="Hirokawa N."/>
            <person name="Hill D."/>
            <person name="Huminiecki L."/>
            <person name="Iacono M."/>
            <person name="Ikeo K."/>
            <person name="Iwama A."/>
            <person name="Ishikawa T."/>
            <person name="Jakt M."/>
            <person name="Kanapin A."/>
            <person name="Katoh M."/>
            <person name="Kawasawa Y."/>
            <person name="Kelso J."/>
            <person name="Kitamura H."/>
            <person name="Kitano H."/>
            <person name="Kollias G."/>
            <person name="Krishnan S.P."/>
            <person name="Kruger A."/>
            <person name="Kummerfeld S.K."/>
            <person name="Kurochkin I.V."/>
            <person name="Lareau L.F."/>
            <person name="Lazarevic D."/>
            <person name="Lipovich L."/>
            <person name="Liu J."/>
            <person name="Liuni S."/>
            <person name="McWilliam S."/>
            <person name="Madan Babu M."/>
            <person name="Madera M."/>
            <person name="Marchionni L."/>
            <person name="Matsuda H."/>
            <person name="Matsuzawa S."/>
            <person name="Miki H."/>
            <person name="Mignone F."/>
            <person name="Miyake S."/>
            <person name="Morris K."/>
            <person name="Mottagui-Tabar S."/>
            <person name="Mulder N."/>
            <person name="Nakano N."/>
            <person name="Nakauchi H."/>
            <person name="Ng P."/>
            <person name="Nilsson R."/>
            <person name="Nishiguchi S."/>
            <person name="Nishikawa S."/>
            <person name="Nori F."/>
            <person name="Ohara O."/>
            <person name="Okazaki Y."/>
            <person name="Orlando V."/>
            <person name="Pang K.C."/>
            <person name="Pavan W.J."/>
            <person name="Pavesi G."/>
            <person name="Pesole G."/>
            <person name="Petrovsky N."/>
            <person name="Piazza S."/>
            <person name="Reed J."/>
            <person name="Reid J.F."/>
            <person name="Ring B.Z."/>
            <person name="Ringwald M."/>
            <person name="Rost B."/>
            <person name="Ruan Y."/>
            <person name="Salzberg S.L."/>
            <person name="Sandelin A."/>
            <person name="Schneider C."/>
            <person name="Schoenbach C."/>
            <person name="Sekiguchi K."/>
            <person name="Semple C.A."/>
            <person name="Seno S."/>
            <person name="Sessa L."/>
            <person name="Sheng Y."/>
            <person name="Shibata Y."/>
            <person name="Shimada H."/>
            <person name="Shimada K."/>
            <person name="Silva D."/>
            <person name="Sinclair B."/>
            <person name="Sperling S."/>
            <person name="Stupka E."/>
            <person name="Sugiura K."/>
            <person name="Sultana R."/>
            <person name="Takenaka Y."/>
            <person name="Taki K."/>
            <person name="Tammoja K."/>
            <person name="Tan S.L."/>
            <person name="Tang S."/>
            <person name="Taylor M.S."/>
            <person name="Tegner J."/>
            <person name="Teichmann S.A."/>
            <person name="Ueda H.R."/>
            <person name="van Nimwegen E."/>
            <person name="Verardo R."/>
            <person name="Wei C.L."/>
            <person name="Yagi K."/>
            <person name="Yamanishi H."/>
            <person name="Zabarovsky E."/>
            <person name="Zhu S."/>
            <person name="Zimmer A."/>
            <person name="Hide W."/>
            <person name="Bult C."/>
            <person name="Grimmond S.M."/>
            <person name="Teasdale R.D."/>
            <person name="Liu E.T."/>
            <person name="Brusic V."/>
            <person name="Quackenbush J."/>
            <person name="Wahlestedt C."/>
            <person name="Mattick J.S."/>
            <person name="Hume D.A."/>
            <person name="Kai C."/>
            <person name="Sasaki D."/>
            <person name="Tomaru Y."/>
            <person name="Fukuda S."/>
            <person name="Kanamori-Katayama M."/>
            <person name="Suzuki M."/>
            <person name="Aoki J."/>
            <person name="Arakawa T."/>
            <person name="Iida J."/>
            <person name="Imamura K."/>
            <person name="Itoh M."/>
            <person name="Kato T."/>
            <person name="Kawaji H."/>
            <person name="Kawagashira N."/>
            <person name="Kawashima T."/>
            <person name="Kojima M."/>
            <person name="Kondo S."/>
            <person name="Konno H."/>
            <person name="Nakano K."/>
            <person name="Ninomiya N."/>
            <person name="Nishio T."/>
            <person name="Okada M."/>
            <person name="Plessy C."/>
            <person name="Shibata K."/>
            <person name="Shiraki T."/>
            <person name="Suzuki S."/>
            <person name="Tagami M."/>
            <person name="Waki K."/>
            <person name="Watahiki A."/>
            <person name="Okamura-Oho Y."/>
            <person name="Suzuki H."/>
            <person name="Kawai J."/>
            <person name="Hayashizaki Y."/>
        </authorList>
    </citation>
    <scope>NUCLEOTIDE SEQUENCE [LARGE SCALE MRNA]</scope>
    <source>
        <strain>C57BL/6J</strain>
        <tissue>Head</tissue>
    </source>
</reference>
<reference key="2">
    <citation type="journal article" date="2003" name="DNA Res.">
        <title>Prediction of the coding sequences of mouse homologues of KIAA gene: II. The complete nucleotide sequences of 400 mouse KIAA-homologous cDNAs identified by screening of terminal sequences of cDNA clones randomly sampled from size-fractionated libraries.</title>
        <authorList>
            <person name="Okazaki N."/>
            <person name="Kikuno R."/>
            <person name="Ohara R."/>
            <person name="Inamoto S."/>
            <person name="Aizawa H."/>
            <person name="Yuasa S."/>
            <person name="Nakajima D."/>
            <person name="Nagase T."/>
            <person name="Ohara O."/>
            <person name="Koga H."/>
        </authorList>
    </citation>
    <scope>NUCLEOTIDE SEQUENCE [LARGE SCALE MRNA]</scope>
    <source>
        <tissue>Brain</tissue>
    </source>
</reference>
<accession>Q80TC5</accession>
<accession>Q8BPJ3</accession>
<accession>Q8C887</accession>
<sequence length="607" mass="69598">MESRAYPLNLTLKEEQKEEEVEIQELEDGPIDMQKVQICSEGAWVPALFDEVAIYFSDEEWEVLTEQQKALYREVMRMNYETVLSLEFPFPKPDMINRLERDEECPNSDEWRLQGVTFAENEESDFRTPDWASPTNATSHFPQPQPFNSFGLRLPQDITELPEWTEGYPFYMAMGFPGYDLSADDLASKFQFSRGMRRSYDAGFKLMVVEYAESTNNCQAAKQFGVLEKNVRDWRKVKPQLQNAHAMRRAFRGPKNGRFALVDQRVAEYVRYMQAKGDPITREAMQLKALEIAQEMNIPEKGFKASLGWCRRMMRRYDLSLRHKVPVPQHLAEDLTEKLVTYQQSVLALRRTHDYEVAQMGNADETPICLEVPSRVTVDNQGEKPILVKTPGREKLRITAMLGVLADGRKLPPYIILRGTYIPPGKFPSGMEIRCHRYGWMTEDLMQDWLEVVWRRRTGAVPRQRGMLILNGFRCHATDSVKSSMENMNTDMVIIPGGLTSQLQVLDVVVYKPLNDSVRAQYSNWLLAGNLALSPTGNAKKPPLGLFLEWIMVAWNSISSESIVQGFRKCHISSNLEDEGDVLWEIEGELPKEPPKECGPESVAEGD</sequence>
<proteinExistence type="evidence at transcript level"/>
<feature type="chain" id="PRO_0000126132" description="Pogo transposable element with KRAB domain">
    <location>
        <begin position="1"/>
        <end position="607"/>
    </location>
</feature>
<feature type="domain" description="KRAB" evidence="3">
    <location>
        <begin position="47"/>
        <end position="118"/>
    </location>
</feature>
<feature type="domain" description="HTH CENPB-type" evidence="4">
    <location>
        <begin position="250"/>
        <end position="323"/>
    </location>
</feature>
<feature type="domain" description="DDE-1" evidence="2">
    <location>
        <begin position="355"/>
        <end position="567"/>
    </location>
</feature>
<feature type="region of interest" description="Disordered" evidence="5">
    <location>
        <begin position="588"/>
        <end position="607"/>
    </location>
</feature>
<feature type="coiled-coil region" evidence="2">
    <location>
        <begin position="8"/>
        <end position="29"/>
    </location>
</feature>
<feature type="compositionally biased region" description="Basic and acidic residues" evidence="5">
    <location>
        <begin position="589"/>
        <end position="599"/>
    </location>
</feature>
<feature type="cross-link" description="Glycyl lysine isopeptide (Lys-Gly) (interchain with G-Cter in SUMO2)" evidence="1">
    <location>
        <position position="13"/>
    </location>
</feature>
<feature type="cross-link" description="Glycyl lysine isopeptide (Lys-Gly) (interchain with G-Cter in SUMO2)" evidence="1">
    <location>
        <position position="384"/>
    </location>
</feature>
<feature type="sequence conflict" description="In Ref. 1; BAC35580." evidence="6" ref="1">
    <original>P</original>
    <variation>H</variation>
    <location>
        <position position="177"/>
    </location>
</feature>
<comment type="subcellular location">
    <subcellularLocation>
        <location evidence="6">Nucleus</location>
    </subcellularLocation>
</comment>
<comment type="sequence caution" evidence="6">
    <conflict type="erroneous initiation">
        <sequence resource="EMBL-CDS" id="BAC33234"/>
    </conflict>
</comment>
<comment type="sequence caution" evidence="6">
    <conflict type="erroneous initiation">
        <sequence resource="EMBL-CDS" id="BAC35580"/>
    </conflict>
</comment>
<comment type="sequence caution" evidence="6">
    <conflict type="erroneous initiation">
        <sequence resource="EMBL-CDS" id="BAC65802"/>
    </conflict>
</comment>
<dbReference type="EMBL" id="AK048067">
    <property type="protein sequence ID" value="BAC33234.1"/>
    <property type="status" value="ALT_INIT"/>
    <property type="molecule type" value="mRNA"/>
</dbReference>
<dbReference type="EMBL" id="AK053898">
    <property type="protein sequence ID" value="BAC35580.1"/>
    <property type="status" value="ALT_INIT"/>
    <property type="molecule type" value="mRNA"/>
</dbReference>
<dbReference type="EMBL" id="AK122520">
    <property type="protein sequence ID" value="BAC65802.1"/>
    <property type="status" value="ALT_INIT"/>
    <property type="molecule type" value="mRNA"/>
</dbReference>
<dbReference type="CCDS" id="CCDS35762.1"/>
<dbReference type="CCDS" id="CCDS48432.1"/>
<dbReference type="RefSeq" id="NP_001136420.2">
    <property type="nucleotide sequence ID" value="NM_001142948.4"/>
</dbReference>
<dbReference type="RefSeq" id="NP_780379.3">
    <property type="nucleotide sequence ID" value="NM_175170.7"/>
</dbReference>
<dbReference type="SMR" id="Q80TC5"/>
<dbReference type="FunCoup" id="Q80TC5">
    <property type="interactions" value="2439"/>
</dbReference>
<dbReference type="STRING" id="10090.ENSMUSP00000127395"/>
<dbReference type="PhosphoSitePlus" id="Q80TC5"/>
<dbReference type="PaxDb" id="10090-ENSMUSP00000127395"/>
<dbReference type="ProteomicsDB" id="289717"/>
<dbReference type="DNASU" id="71592"/>
<dbReference type="Ensembl" id="ENSMUST00000128861.4">
    <property type="protein sequence ID" value="ENSMUSP00000118270.4"/>
    <property type="gene ID" value="ENSMUSG00000040596.17"/>
</dbReference>
<dbReference type="Ensembl" id="ENSMUST00000131487.9">
    <property type="protein sequence ID" value="ENSMUSP00000116477.4"/>
    <property type="gene ID" value="ENSMUSG00000040596.17"/>
</dbReference>
<dbReference type="Ensembl" id="ENSMUST00000135673.9">
    <property type="protein sequence ID" value="ENSMUSP00000120352.4"/>
    <property type="gene ID" value="ENSMUSG00000040596.17"/>
</dbReference>
<dbReference type="GeneID" id="71592"/>
<dbReference type="KEGG" id="mmu:71592"/>
<dbReference type="UCSC" id="uc007dko.2">
    <property type="organism name" value="mouse"/>
</dbReference>
<dbReference type="AGR" id="MGI:1918842"/>
<dbReference type="CTD" id="57645"/>
<dbReference type="MGI" id="MGI:1918842">
    <property type="gene designation" value="Pogk"/>
</dbReference>
<dbReference type="eggNOG" id="KOG3105">
    <property type="taxonomic scope" value="Eukaryota"/>
</dbReference>
<dbReference type="GeneTree" id="ENSGT00440000039028"/>
<dbReference type="InParanoid" id="Q80TC5"/>
<dbReference type="OrthoDB" id="5422061at2759"/>
<dbReference type="PhylomeDB" id="Q80TC5"/>
<dbReference type="BioGRID-ORCS" id="71592">
    <property type="hits" value="1 hit in 78 CRISPR screens"/>
</dbReference>
<dbReference type="ChiTaRS" id="Pogk">
    <property type="organism name" value="mouse"/>
</dbReference>
<dbReference type="PRO" id="PR:Q80TC5"/>
<dbReference type="Proteomes" id="UP000000589">
    <property type="component" value="Chromosome 1"/>
</dbReference>
<dbReference type="RNAct" id="Q80TC5">
    <property type="molecule type" value="protein"/>
</dbReference>
<dbReference type="GO" id="GO:0005654">
    <property type="term" value="C:nucleoplasm"/>
    <property type="evidence" value="ECO:0007669"/>
    <property type="project" value="Ensembl"/>
</dbReference>
<dbReference type="GO" id="GO:0003677">
    <property type="term" value="F:DNA binding"/>
    <property type="evidence" value="ECO:0007669"/>
    <property type="project" value="UniProtKB-KW"/>
</dbReference>
<dbReference type="GO" id="GO:0006355">
    <property type="term" value="P:regulation of DNA-templated transcription"/>
    <property type="evidence" value="ECO:0007669"/>
    <property type="project" value="InterPro"/>
</dbReference>
<dbReference type="CDD" id="cd07765">
    <property type="entry name" value="KRAB_A-box"/>
    <property type="match status" value="1"/>
</dbReference>
<dbReference type="Gene3D" id="6.10.140.140">
    <property type="match status" value="1"/>
</dbReference>
<dbReference type="Gene3D" id="1.10.10.60">
    <property type="entry name" value="Homeodomain-like"/>
    <property type="match status" value="2"/>
</dbReference>
<dbReference type="InterPro" id="IPR003655">
    <property type="entry name" value="aKRAB"/>
</dbReference>
<dbReference type="InterPro" id="IPR018586">
    <property type="entry name" value="Brinker_DNA-bd"/>
</dbReference>
<dbReference type="InterPro" id="IPR050863">
    <property type="entry name" value="CenT-Element_Derived"/>
</dbReference>
<dbReference type="InterPro" id="IPR004875">
    <property type="entry name" value="DDE_SF_endonuclease_dom"/>
</dbReference>
<dbReference type="InterPro" id="IPR009057">
    <property type="entry name" value="Homeodomain-like_sf"/>
</dbReference>
<dbReference type="InterPro" id="IPR006600">
    <property type="entry name" value="HTH_CenpB_DNA-bd_dom"/>
</dbReference>
<dbReference type="InterPro" id="IPR001909">
    <property type="entry name" value="KRAB"/>
</dbReference>
<dbReference type="InterPro" id="IPR036051">
    <property type="entry name" value="KRAB_dom_sf"/>
</dbReference>
<dbReference type="PANTHER" id="PTHR19303:SF74">
    <property type="entry name" value="POGO TRANSPOSABLE ELEMENT WITH KRAB DOMAIN"/>
    <property type="match status" value="1"/>
</dbReference>
<dbReference type="PANTHER" id="PTHR19303">
    <property type="entry name" value="TRANSPOSON"/>
    <property type="match status" value="1"/>
</dbReference>
<dbReference type="Pfam" id="PF09607">
    <property type="entry name" value="BrkDBD"/>
    <property type="match status" value="1"/>
</dbReference>
<dbReference type="Pfam" id="PF03184">
    <property type="entry name" value="DDE_1"/>
    <property type="match status" value="1"/>
</dbReference>
<dbReference type="Pfam" id="PF03221">
    <property type="entry name" value="HTH_Tnp_Tc5"/>
    <property type="match status" value="1"/>
</dbReference>
<dbReference type="Pfam" id="PF01352">
    <property type="entry name" value="KRAB"/>
    <property type="match status" value="1"/>
</dbReference>
<dbReference type="SMART" id="SM00674">
    <property type="entry name" value="CENPB"/>
    <property type="match status" value="1"/>
</dbReference>
<dbReference type="SMART" id="SM00349">
    <property type="entry name" value="KRAB"/>
    <property type="match status" value="1"/>
</dbReference>
<dbReference type="SUPFAM" id="SSF46689">
    <property type="entry name" value="Homeodomain-like"/>
    <property type="match status" value="1"/>
</dbReference>
<dbReference type="SUPFAM" id="SSF109640">
    <property type="entry name" value="KRAB domain (Kruppel-associated box)"/>
    <property type="match status" value="1"/>
</dbReference>
<dbReference type="PROSITE" id="PS51253">
    <property type="entry name" value="HTH_CENPB"/>
    <property type="match status" value="1"/>
</dbReference>
<dbReference type="PROSITE" id="PS50805">
    <property type="entry name" value="KRAB"/>
    <property type="match status" value="1"/>
</dbReference>
<name>POGK_MOUSE</name>
<protein>
    <recommendedName>
        <fullName>Pogo transposable element with KRAB domain</fullName>
    </recommendedName>
</protein>